<accession>Q8TCX1</accession>
<accession>A8MVJ5</accession>
<accession>Q53F57</accession>
<accession>Q6PDB2</accession>
<accession>Q8IWA3</accession>
<accession>Q96B03</accession>
<accession>Q96J00</accession>
<accession>Q9Y370</accession>
<accession>Q9Y3S9</accession>
<evidence type="ECO:0000250" key="1">
    <source>
        <dbReference type="UniProtKB" id="Q8K0T2"/>
    </source>
</evidence>
<evidence type="ECO:0000269" key="2">
    <source>
    </source>
</evidence>
<evidence type="ECO:0000269" key="3">
    <source>
    </source>
</evidence>
<evidence type="ECO:0000269" key="4">
    <source>
    </source>
</evidence>
<evidence type="ECO:0000269" key="5">
    <source>
    </source>
</evidence>
<evidence type="ECO:0000269" key="6">
    <source>
    </source>
</evidence>
<evidence type="ECO:0000269" key="7">
    <source>
    </source>
</evidence>
<evidence type="ECO:0000269" key="8">
    <source>
    </source>
</evidence>
<evidence type="ECO:0000269" key="9">
    <source ref="3"/>
</evidence>
<evidence type="ECO:0000303" key="10">
    <source>
    </source>
</evidence>
<evidence type="ECO:0000303" key="11">
    <source>
    </source>
</evidence>
<evidence type="ECO:0000303" key="12">
    <source>
    </source>
</evidence>
<evidence type="ECO:0000303" key="13">
    <source>
    </source>
</evidence>
<evidence type="ECO:0000305" key="14"/>
<evidence type="ECO:0007744" key="15">
    <source>
        <dbReference type="PDB" id="6RLB"/>
    </source>
</evidence>
<evidence type="ECO:0007744" key="16">
    <source>
        <dbReference type="PDB" id="6SC2"/>
    </source>
</evidence>
<sequence>MPSETLWEIAKAEVEKRGINGSEGDGAEIAEKFVFFIGSKNGGKTTIILRCLDRDEPPKPTLALEYTYGRRAKGHNTPKDIAHFWELGGGTSLLDLISIPITGDTLRTFSLVLVLDLSKPNDLWPTMENLLQATKSHVDKVIMKLGKTNAKAVSEMRQKIWNNMPKDHPDHELIDPFPVPLVIIGSKYDVFQDFESEKRKVICKTLRFVAHYYGASLMFTSKSEALLLKIRGVINQLAFGIDKSKSICVDQNKPLFITAGLDSFGQIGSPPVPENDIGKLHAHSPMELWKKVYEKLFPPKSINTLKDIKDPARDPQYAENEVDEMRIQKDLELEQYKRSSSKSWKQIELDS</sequence>
<proteinExistence type="evidence at protein level"/>
<organism>
    <name type="scientific">Homo sapiens</name>
    <name type="common">Human</name>
    <dbReference type="NCBI Taxonomy" id="9606"/>
    <lineage>
        <taxon>Eukaryota</taxon>
        <taxon>Metazoa</taxon>
        <taxon>Chordata</taxon>
        <taxon>Craniata</taxon>
        <taxon>Vertebrata</taxon>
        <taxon>Euteleostomi</taxon>
        <taxon>Mammalia</taxon>
        <taxon>Eutheria</taxon>
        <taxon>Euarchontoglires</taxon>
        <taxon>Primates</taxon>
        <taxon>Haplorrhini</taxon>
        <taxon>Catarrhini</taxon>
        <taxon>Hominidae</taxon>
        <taxon>Homo</taxon>
    </lineage>
</organism>
<keyword id="KW-0002">3D-structure</keyword>
<keyword id="KW-0025">Alternative splicing</keyword>
<keyword id="KW-0966">Cell projection</keyword>
<keyword id="KW-1186">Ciliopathy</keyword>
<keyword id="KW-0969">Cilium</keyword>
<keyword id="KW-0970">Cilium biogenesis/degradation</keyword>
<keyword id="KW-0963">Cytoplasm</keyword>
<keyword id="KW-0206">Cytoskeleton</keyword>
<keyword id="KW-0217">Developmental protein</keyword>
<keyword id="KW-0225">Disease variant</keyword>
<keyword id="KW-0243">Dynein</keyword>
<keyword id="KW-0333">Golgi apparatus</keyword>
<keyword id="KW-0493">Microtubule</keyword>
<keyword id="KW-0505">Motor protein</keyword>
<keyword id="KW-1267">Proteomics identification</keyword>
<keyword id="KW-1185">Reference proteome</keyword>
<dbReference type="EMBL" id="AY083346">
    <property type="protein sequence ID" value="AAL99216.1"/>
    <property type="molecule type" value="mRNA"/>
</dbReference>
<dbReference type="EMBL" id="AF151818">
    <property type="protein sequence ID" value="AAD34055.1"/>
    <property type="status" value="ALT_FRAME"/>
    <property type="molecule type" value="mRNA"/>
</dbReference>
<dbReference type="EMBL" id="AK223432">
    <property type="protein sequence ID" value="BAD97152.1"/>
    <property type="molecule type" value="mRNA"/>
</dbReference>
<dbReference type="EMBL" id="AC011242">
    <property type="protein sequence ID" value="AAY14702.1"/>
    <property type="molecule type" value="Genomic_DNA"/>
</dbReference>
<dbReference type="EMBL" id="CH471053">
    <property type="protein sequence ID" value="EAX00289.1"/>
    <property type="molecule type" value="Genomic_DNA"/>
</dbReference>
<dbReference type="EMBL" id="CH471053">
    <property type="protein sequence ID" value="EAX00290.1"/>
    <property type="molecule type" value="Genomic_DNA"/>
</dbReference>
<dbReference type="EMBL" id="CH471053">
    <property type="protein sequence ID" value="EAX00291.1"/>
    <property type="molecule type" value="Genomic_DNA"/>
</dbReference>
<dbReference type="EMBL" id="BC006969">
    <property type="protein sequence ID" value="AAH06969.1"/>
    <property type="molecule type" value="mRNA"/>
</dbReference>
<dbReference type="EMBL" id="BC016324">
    <property type="protein sequence ID" value="AAH16324.1"/>
    <property type="molecule type" value="mRNA"/>
</dbReference>
<dbReference type="EMBL" id="BC040558">
    <property type="protein sequence ID" value="AAH40558.1"/>
    <property type="molecule type" value="mRNA"/>
</dbReference>
<dbReference type="EMBL" id="BC058823">
    <property type="protein sequence ID" value="AAH58823.1"/>
    <property type="molecule type" value="mRNA"/>
</dbReference>
<dbReference type="EMBL" id="AL050006">
    <property type="protein sequence ID" value="CAB43233.1"/>
    <property type="molecule type" value="mRNA"/>
</dbReference>
<dbReference type="CCDS" id="CCDS1813.1">
    <molecule id="Q8TCX1-1"/>
</dbReference>
<dbReference type="CCDS" id="CCDS46270.1">
    <molecule id="Q8TCX1-4"/>
</dbReference>
<dbReference type="CCDS" id="CCDS62903.1">
    <molecule id="Q8TCX1-2"/>
</dbReference>
<dbReference type="PIR" id="T08695">
    <property type="entry name" value="T08695"/>
</dbReference>
<dbReference type="RefSeq" id="NP_001180393.1">
    <molecule id="Q8TCX1-2"/>
    <property type="nucleotide sequence ID" value="NM_001193464.2"/>
</dbReference>
<dbReference type="RefSeq" id="NP_056337.1">
    <molecule id="Q8TCX1-4"/>
    <property type="nucleotide sequence ID" value="NM_015522.4"/>
</dbReference>
<dbReference type="RefSeq" id="NP_057092.2">
    <molecule id="Q8TCX1-1"/>
    <property type="nucleotide sequence ID" value="NM_016008.3"/>
</dbReference>
<dbReference type="PDB" id="6RLB">
    <property type="method" value="EM"/>
    <property type="resolution" value="4.50 A"/>
    <property type="chains" value="E/F=1-351"/>
</dbReference>
<dbReference type="PDB" id="6SC2">
    <property type="method" value="EM"/>
    <property type="resolution" value="3.90 A"/>
    <property type="chains" value="E/F=1-351"/>
</dbReference>
<dbReference type="PDB" id="8RGH">
    <property type="method" value="EM"/>
    <property type="resolution" value="3.90 A"/>
    <property type="chains" value="E=1-351"/>
</dbReference>
<dbReference type="PDBsum" id="6RLB"/>
<dbReference type="PDBsum" id="6SC2"/>
<dbReference type="PDBsum" id="8RGH"/>
<dbReference type="EMDB" id="EMD-19133"/>
<dbReference type="EMDB" id="EMD-4918"/>
<dbReference type="SMR" id="Q8TCX1"/>
<dbReference type="BioGRID" id="119644">
    <property type="interactions" value="47"/>
</dbReference>
<dbReference type="CORUM" id="Q8TCX1"/>
<dbReference type="FunCoup" id="Q8TCX1">
    <property type="interactions" value="563"/>
</dbReference>
<dbReference type="IntAct" id="Q8TCX1">
    <property type="interactions" value="36"/>
</dbReference>
<dbReference type="MINT" id="Q8TCX1"/>
<dbReference type="STRING" id="9606.ENSP00000474032"/>
<dbReference type="GlyGen" id="Q8TCX1">
    <property type="glycosylation" value="1 site, 1 O-linked glycan (1 site)"/>
</dbReference>
<dbReference type="iPTMnet" id="Q8TCX1"/>
<dbReference type="PhosphoSitePlus" id="Q8TCX1"/>
<dbReference type="BioMuta" id="DYNC2LI1"/>
<dbReference type="DMDM" id="74715850"/>
<dbReference type="jPOST" id="Q8TCX1"/>
<dbReference type="MassIVE" id="Q8TCX1"/>
<dbReference type="PaxDb" id="9606-ENSP00000474032"/>
<dbReference type="PeptideAtlas" id="Q8TCX1"/>
<dbReference type="ProteomicsDB" id="74183">
    <molecule id="Q8TCX1-1"/>
</dbReference>
<dbReference type="ProteomicsDB" id="74184">
    <molecule id="Q8TCX1-2"/>
</dbReference>
<dbReference type="ProteomicsDB" id="74185">
    <molecule id="Q8TCX1-3"/>
</dbReference>
<dbReference type="ProteomicsDB" id="74186">
    <molecule id="Q8TCX1-4"/>
</dbReference>
<dbReference type="ProteomicsDB" id="74187">
    <molecule id="Q8TCX1-5"/>
</dbReference>
<dbReference type="Pumba" id="Q8TCX1"/>
<dbReference type="Antibodypedia" id="47397">
    <property type="antibodies" value="93 antibodies from 20 providers"/>
</dbReference>
<dbReference type="DNASU" id="51626"/>
<dbReference type="Ensembl" id="ENST00000260605.12">
    <molecule id="Q8TCX1-1"/>
    <property type="protein sequence ID" value="ENSP00000260605.8"/>
    <property type="gene ID" value="ENSG00000138036.18"/>
</dbReference>
<dbReference type="Ensembl" id="ENST00000398823.6">
    <molecule id="Q8TCX1-5"/>
    <property type="protein sequence ID" value="ENSP00000381804.2"/>
    <property type="gene ID" value="ENSG00000138036.18"/>
</dbReference>
<dbReference type="Ensembl" id="ENST00000406852.7">
    <molecule id="Q8TCX1-4"/>
    <property type="protein sequence ID" value="ENSP00000385738.3"/>
    <property type="gene ID" value="ENSG00000138036.18"/>
</dbReference>
<dbReference type="Ensembl" id="ENST00000605786.5">
    <molecule id="Q8TCX1-2"/>
    <property type="protein sequence ID" value="ENSP00000474032.1"/>
    <property type="gene ID" value="ENSG00000138036.18"/>
</dbReference>
<dbReference type="GeneID" id="51626"/>
<dbReference type="KEGG" id="hsa:51626"/>
<dbReference type="MANE-Select" id="ENST00000260605.12">
    <property type="protein sequence ID" value="ENSP00000260605.8"/>
    <property type="RefSeq nucleotide sequence ID" value="NM_016008.4"/>
    <property type="RefSeq protein sequence ID" value="NP_057092.2"/>
</dbReference>
<dbReference type="UCSC" id="uc002rth.4">
    <molecule id="Q8TCX1-1"/>
    <property type="organism name" value="human"/>
</dbReference>
<dbReference type="AGR" id="HGNC:24595"/>
<dbReference type="CTD" id="51626"/>
<dbReference type="DisGeNET" id="51626"/>
<dbReference type="GeneCards" id="DYNC2LI1"/>
<dbReference type="GeneReviews" id="DYNC2LI1"/>
<dbReference type="HGNC" id="HGNC:24595">
    <property type="gene designation" value="DYNC2LI1"/>
</dbReference>
<dbReference type="HPA" id="ENSG00000138036">
    <property type="expression patterns" value="Low tissue specificity"/>
</dbReference>
<dbReference type="MalaCards" id="DYNC2LI1"/>
<dbReference type="MIM" id="617083">
    <property type="type" value="gene"/>
</dbReference>
<dbReference type="MIM" id="617088">
    <property type="type" value="phenotype"/>
</dbReference>
<dbReference type="neXtProt" id="NX_Q8TCX1"/>
<dbReference type="OpenTargets" id="ENSG00000138036"/>
<dbReference type="Orphanet" id="289">
    <property type="disease" value="Ellis Van Creveld syndrome"/>
</dbReference>
<dbReference type="Orphanet" id="474">
    <property type="disease" value="Jeune syndrome"/>
</dbReference>
<dbReference type="PharmGKB" id="PA142671919"/>
<dbReference type="VEuPathDB" id="HostDB:ENSG00000138036"/>
<dbReference type="eggNOG" id="KOG3929">
    <property type="taxonomic scope" value="Eukaryota"/>
</dbReference>
<dbReference type="GeneTree" id="ENSGT00390000010498"/>
<dbReference type="HOGENOM" id="CLU_1492733_0_0_1"/>
<dbReference type="InParanoid" id="Q8TCX1"/>
<dbReference type="OMA" id="FWEIAQG"/>
<dbReference type="OrthoDB" id="10263060at2759"/>
<dbReference type="PAN-GO" id="Q8TCX1">
    <property type="GO annotations" value="6 GO annotations based on evolutionary models"/>
</dbReference>
<dbReference type="PhylomeDB" id="Q8TCX1"/>
<dbReference type="TreeFam" id="TF314138"/>
<dbReference type="PathwayCommons" id="Q8TCX1"/>
<dbReference type="Reactome" id="R-HSA-5620924">
    <property type="pathway name" value="Intraflagellar transport"/>
</dbReference>
<dbReference type="SignaLink" id="Q8TCX1"/>
<dbReference type="BioGRID-ORCS" id="51626">
    <property type="hits" value="18 hits in 1150 CRISPR screens"/>
</dbReference>
<dbReference type="ChiTaRS" id="DYNC2LI1">
    <property type="organism name" value="human"/>
</dbReference>
<dbReference type="GenomeRNAi" id="51626"/>
<dbReference type="Pharos" id="Q8TCX1">
    <property type="development level" value="Tbio"/>
</dbReference>
<dbReference type="PRO" id="PR:Q8TCX1"/>
<dbReference type="Proteomes" id="UP000005640">
    <property type="component" value="Chromosome 2"/>
</dbReference>
<dbReference type="RNAct" id="Q8TCX1">
    <property type="molecule type" value="protein"/>
</dbReference>
<dbReference type="Bgee" id="ENSG00000138036">
    <property type="expression patterns" value="Expressed in right uterine tube and 204 other cell types or tissues"/>
</dbReference>
<dbReference type="ExpressionAtlas" id="Q8TCX1">
    <property type="expression patterns" value="baseline and differential"/>
</dbReference>
<dbReference type="GO" id="GO:0045177">
    <property type="term" value="C:apical part of cell"/>
    <property type="evidence" value="ECO:0000250"/>
    <property type="project" value="BHF-UCL"/>
</dbReference>
<dbReference type="GO" id="GO:0005930">
    <property type="term" value="C:axoneme"/>
    <property type="evidence" value="ECO:0000250"/>
    <property type="project" value="BHF-UCL"/>
</dbReference>
<dbReference type="GO" id="GO:0005813">
    <property type="term" value="C:centrosome"/>
    <property type="evidence" value="ECO:0000314"/>
    <property type="project" value="UniProtKB"/>
</dbReference>
<dbReference type="GO" id="GO:0036064">
    <property type="term" value="C:ciliary basal body"/>
    <property type="evidence" value="ECO:0000314"/>
    <property type="project" value="HPA"/>
</dbReference>
<dbReference type="GO" id="GO:0097542">
    <property type="term" value="C:ciliary tip"/>
    <property type="evidence" value="ECO:0000304"/>
    <property type="project" value="Reactome"/>
</dbReference>
<dbReference type="GO" id="GO:0035869">
    <property type="term" value="C:ciliary transition zone"/>
    <property type="evidence" value="ECO:0000314"/>
    <property type="project" value="UniProtKB"/>
</dbReference>
<dbReference type="GO" id="GO:0005929">
    <property type="term" value="C:cilium"/>
    <property type="evidence" value="ECO:0000314"/>
    <property type="project" value="HPA"/>
</dbReference>
<dbReference type="GO" id="GO:0005737">
    <property type="term" value="C:cytoplasm"/>
    <property type="evidence" value="ECO:0000314"/>
    <property type="project" value="UniProtKB"/>
</dbReference>
<dbReference type="GO" id="GO:0005868">
    <property type="term" value="C:cytoplasmic dynein complex"/>
    <property type="evidence" value="ECO:0000314"/>
    <property type="project" value="UniProtKB"/>
</dbReference>
<dbReference type="GO" id="GO:0005829">
    <property type="term" value="C:cytosol"/>
    <property type="evidence" value="ECO:0000314"/>
    <property type="project" value="HPA"/>
</dbReference>
<dbReference type="GO" id="GO:0005794">
    <property type="term" value="C:Golgi apparatus"/>
    <property type="evidence" value="ECO:0007669"/>
    <property type="project" value="UniProtKB-SubCell"/>
</dbReference>
<dbReference type="GO" id="GO:0005874">
    <property type="term" value="C:microtubule"/>
    <property type="evidence" value="ECO:0007669"/>
    <property type="project" value="UniProtKB-KW"/>
</dbReference>
<dbReference type="GO" id="GO:0031514">
    <property type="term" value="C:motile cilium"/>
    <property type="evidence" value="ECO:0000250"/>
    <property type="project" value="BHF-UCL"/>
</dbReference>
<dbReference type="GO" id="GO:0016607">
    <property type="term" value="C:nuclear speck"/>
    <property type="evidence" value="ECO:0000314"/>
    <property type="project" value="HPA"/>
</dbReference>
<dbReference type="GO" id="GO:0045504">
    <property type="term" value="F:dynein heavy chain binding"/>
    <property type="evidence" value="ECO:0000314"/>
    <property type="project" value="UniProtKB"/>
</dbReference>
<dbReference type="GO" id="GO:0007368">
    <property type="term" value="P:determination of left/right symmetry"/>
    <property type="evidence" value="ECO:0007669"/>
    <property type="project" value="Ensembl"/>
</dbReference>
<dbReference type="GO" id="GO:0035721">
    <property type="term" value="P:intraciliary retrograde transport"/>
    <property type="evidence" value="ECO:0000318"/>
    <property type="project" value="GO_Central"/>
</dbReference>
<dbReference type="GO" id="GO:0035735">
    <property type="term" value="P:intraciliary transport involved in cilium assembly"/>
    <property type="evidence" value="ECO:0000315"/>
    <property type="project" value="UniProtKB"/>
</dbReference>
<dbReference type="GO" id="GO:1902017">
    <property type="term" value="P:regulation of cilium assembly"/>
    <property type="evidence" value="ECO:0000315"/>
    <property type="project" value="UniProtKB"/>
</dbReference>
<dbReference type="InterPro" id="IPR040045">
    <property type="entry name" value="DYNC2LI1"/>
</dbReference>
<dbReference type="InterPro" id="IPR022780">
    <property type="entry name" value="Dynein_light_int_chain"/>
</dbReference>
<dbReference type="InterPro" id="IPR027417">
    <property type="entry name" value="P-loop_NTPase"/>
</dbReference>
<dbReference type="PANTHER" id="PTHR13236:SF0">
    <property type="entry name" value="CYTOPLASMIC DYNEIN 2 LIGHT INTERMEDIATE CHAIN 1"/>
    <property type="match status" value="1"/>
</dbReference>
<dbReference type="PANTHER" id="PTHR13236">
    <property type="entry name" value="DYNEIN 2 LIGHT INTERMEDIATE CHAIN, ISOFORM 2"/>
    <property type="match status" value="1"/>
</dbReference>
<dbReference type="Pfam" id="PF05783">
    <property type="entry name" value="DLIC"/>
    <property type="match status" value="1"/>
</dbReference>
<dbReference type="SUPFAM" id="SSF52540">
    <property type="entry name" value="P-loop containing nucleoside triphosphate hydrolases"/>
    <property type="match status" value="1"/>
</dbReference>
<reference key="1">
    <citation type="journal article" date="2002" name="Mol. Biol. Cell">
        <title>Identification of a novel light intermediate chain (D2LIC) for mammalian cytoplasmic dynein 2.</title>
        <authorList>
            <person name="Grissom P.M."/>
            <person name="Vaisberg E.A."/>
            <person name="McIntosh J.R."/>
        </authorList>
    </citation>
    <scope>NUCLEOTIDE SEQUENCE [MRNA] (ISOFORM 1)</scope>
    <scope>SUBCELLULAR LOCATION</scope>
</reference>
<reference key="2">
    <citation type="journal article" date="2000" name="Genome Res.">
        <title>Identification of novel human genes evolutionarily conserved in Caenorhabditis elegans by comparative proteomics.</title>
        <authorList>
            <person name="Lai C.-H."/>
            <person name="Chou C.-Y."/>
            <person name="Ch'ang L.-Y."/>
            <person name="Liu C.-S."/>
            <person name="Lin W.-C."/>
        </authorList>
    </citation>
    <scope>NUCLEOTIDE SEQUENCE [LARGE SCALE MRNA] (ISOFORM 1)</scope>
</reference>
<reference key="3">
    <citation type="submission" date="2005-04" db="EMBL/GenBank/DDBJ databases">
        <authorList>
            <person name="Totoki Y."/>
            <person name="Toyoda A."/>
            <person name="Takeda T."/>
            <person name="Sakaki Y."/>
            <person name="Tanaka A."/>
            <person name="Yokoyama S."/>
        </authorList>
    </citation>
    <scope>NUCLEOTIDE SEQUENCE [LARGE SCALE MRNA] (ISOFORM 1)</scope>
    <scope>VARIANTS SER-33 AND LEU-230</scope>
    <source>
        <tissue>Testis</tissue>
    </source>
</reference>
<reference key="4">
    <citation type="journal article" date="2005" name="Nature">
        <title>Generation and annotation of the DNA sequences of human chromosomes 2 and 4.</title>
        <authorList>
            <person name="Hillier L.W."/>
            <person name="Graves T.A."/>
            <person name="Fulton R.S."/>
            <person name="Fulton L.A."/>
            <person name="Pepin K.H."/>
            <person name="Minx P."/>
            <person name="Wagner-McPherson C."/>
            <person name="Layman D."/>
            <person name="Wylie K."/>
            <person name="Sekhon M."/>
            <person name="Becker M.C."/>
            <person name="Fewell G.A."/>
            <person name="Delehaunty K.D."/>
            <person name="Miner T.L."/>
            <person name="Nash W.E."/>
            <person name="Kremitzki C."/>
            <person name="Oddy L."/>
            <person name="Du H."/>
            <person name="Sun H."/>
            <person name="Bradshaw-Cordum H."/>
            <person name="Ali J."/>
            <person name="Carter J."/>
            <person name="Cordes M."/>
            <person name="Harris A."/>
            <person name="Isak A."/>
            <person name="van Brunt A."/>
            <person name="Nguyen C."/>
            <person name="Du F."/>
            <person name="Courtney L."/>
            <person name="Kalicki J."/>
            <person name="Ozersky P."/>
            <person name="Abbott S."/>
            <person name="Armstrong J."/>
            <person name="Belter E.A."/>
            <person name="Caruso L."/>
            <person name="Cedroni M."/>
            <person name="Cotton M."/>
            <person name="Davidson T."/>
            <person name="Desai A."/>
            <person name="Elliott G."/>
            <person name="Erb T."/>
            <person name="Fronick C."/>
            <person name="Gaige T."/>
            <person name="Haakenson W."/>
            <person name="Haglund K."/>
            <person name="Holmes A."/>
            <person name="Harkins R."/>
            <person name="Kim K."/>
            <person name="Kruchowski S.S."/>
            <person name="Strong C.M."/>
            <person name="Grewal N."/>
            <person name="Goyea E."/>
            <person name="Hou S."/>
            <person name="Levy A."/>
            <person name="Martinka S."/>
            <person name="Mead K."/>
            <person name="McLellan M.D."/>
            <person name="Meyer R."/>
            <person name="Randall-Maher J."/>
            <person name="Tomlinson C."/>
            <person name="Dauphin-Kohlberg S."/>
            <person name="Kozlowicz-Reilly A."/>
            <person name="Shah N."/>
            <person name="Swearengen-Shahid S."/>
            <person name="Snider J."/>
            <person name="Strong J.T."/>
            <person name="Thompson J."/>
            <person name="Yoakum M."/>
            <person name="Leonard S."/>
            <person name="Pearman C."/>
            <person name="Trani L."/>
            <person name="Radionenko M."/>
            <person name="Waligorski J.E."/>
            <person name="Wang C."/>
            <person name="Rock S.M."/>
            <person name="Tin-Wollam A.-M."/>
            <person name="Maupin R."/>
            <person name="Latreille P."/>
            <person name="Wendl M.C."/>
            <person name="Yang S.-P."/>
            <person name="Pohl C."/>
            <person name="Wallis J.W."/>
            <person name="Spieth J."/>
            <person name="Bieri T.A."/>
            <person name="Berkowicz N."/>
            <person name="Nelson J.O."/>
            <person name="Osborne J."/>
            <person name="Ding L."/>
            <person name="Meyer R."/>
            <person name="Sabo A."/>
            <person name="Shotland Y."/>
            <person name="Sinha P."/>
            <person name="Wohldmann P.E."/>
            <person name="Cook L.L."/>
            <person name="Hickenbotham M.T."/>
            <person name="Eldred J."/>
            <person name="Williams D."/>
            <person name="Jones T.A."/>
            <person name="She X."/>
            <person name="Ciccarelli F.D."/>
            <person name="Izaurralde E."/>
            <person name="Taylor J."/>
            <person name="Schmutz J."/>
            <person name="Myers R.M."/>
            <person name="Cox D.R."/>
            <person name="Huang X."/>
            <person name="McPherson J.D."/>
            <person name="Mardis E.R."/>
            <person name="Clifton S.W."/>
            <person name="Warren W.C."/>
            <person name="Chinwalla A.T."/>
            <person name="Eddy S.R."/>
            <person name="Marra M.A."/>
            <person name="Ovcharenko I."/>
            <person name="Furey T.S."/>
            <person name="Miller W."/>
            <person name="Eichler E.E."/>
            <person name="Bork P."/>
            <person name="Suyama M."/>
            <person name="Torrents D."/>
            <person name="Waterston R.H."/>
            <person name="Wilson R.K."/>
        </authorList>
    </citation>
    <scope>NUCLEOTIDE SEQUENCE [LARGE SCALE GENOMIC DNA]</scope>
</reference>
<reference key="5">
    <citation type="submission" date="2005-09" db="EMBL/GenBank/DDBJ databases">
        <authorList>
            <person name="Mural R.J."/>
            <person name="Istrail S."/>
            <person name="Sutton G.G."/>
            <person name="Florea L."/>
            <person name="Halpern A.L."/>
            <person name="Mobarry C.M."/>
            <person name="Lippert R."/>
            <person name="Walenz B."/>
            <person name="Shatkay H."/>
            <person name="Dew I."/>
            <person name="Miller J.R."/>
            <person name="Flanigan M.J."/>
            <person name="Edwards N.J."/>
            <person name="Bolanos R."/>
            <person name="Fasulo D."/>
            <person name="Halldorsson B.V."/>
            <person name="Hannenhalli S."/>
            <person name="Turner R."/>
            <person name="Yooseph S."/>
            <person name="Lu F."/>
            <person name="Nusskern D.R."/>
            <person name="Shue B.C."/>
            <person name="Zheng X.H."/>
            <person name="Zhong F."/>
            <person name="Delcher A.L."/>
            <person name="Huson D.H."/>
            <person name="Kravitz S.A."/>
            <person name="Mouchard L."/>
            <person name="Reinert K."/>
            <person name="Remington K.A."/>
            <person name="Clark A.G."/>
            <person name="Waterman M.S."/>
            <person name="Eichler E.E."/>
            <person name="Adams M.D."/>
            <person name="Hunkapiller M.W."/>
            <person name="Myers E.W."/>
            <person name="Venter J.C."/>
        </authorList>
    </citation>
    <scope>NUCLEOTIDE SEQUENCE [LARGE SCALE GENOMIC DNA]</scope>
</reference>
<reference key="6">
    <citation type="journal article" date="2004" name="Genome Res.">
        <title>The status, quality, and expansion of the NIH full-length cDNA project: the Mammalian Gene Collection (MGC).</title>
        <authorList>
            <consortium name="The MGC Project Team"/>
        </authorList>
    </citation>
    <scope>NUCLEOTIDE SEQUENCE [LARGE SCALE MRNA] (ISOFORMS 2; 4 AND 5)</scope>
    <scope>VARIANT SER-58</scope>
    <source>
        <tissue>Brain</tissue>
        <tissue>Kidney</tissue>
        <tissue>Testis</tissue>
        <tissue>Urinary bladder</tissue>
    </source>
</reference>
<reference key="7">
    <citation type="journal article" date="2007" name="BMC Genomics">
        <title>The full-ORF clone resource of the German cDNA consortium.</title>
        <authorList>
            <person name="Bechtel S."/>
            <person name="Rosenfelder H."/>
            <person name="Duda A."/>
            <person name="Schmidt C.P."/>
            <person name="Ernst U."/>
            <person name="Wellenreuther R."/>
            <person name="Mehrle A."/>
            <person name="Schuster C."/>
            <person name="Bahr A."/>
            <person name="Bloecker H."/>
            <person name="Heubner D."/>
            <person name="Hoerlein A."/>
            <person name="Michel G."/>
            <person name="Wedler H."/>
            <person name="Koehrer K."/>
            <person name="Ottenwaelder B."/>
            <person name="Poustka A."/>
            <person name="Wiemann S."/>
            <person name="Schupp I."/>
        </authorList>
    </citation>
    <scope>NUCLEOTIDE SEQUENCE [LARGE SCALE MRNA] OF 18-351 (ISOFORM 3)</scope>
    <scope>VARIANTS SER-33 AND LEU-230</scope>
    <source>
        <tissue>Brain</tissue>
    </source>
</reference>
<reference key="8">
    <citation type="journal article" date="2011" name="BMC Syst. Biol.">
        <title>Initial characterization of the human central proteome.</title>
        <authorList>
            <person name="Burkard T.R."/>
            <person name="Planyavsky M."/>
            <person name="Kaupe I."/>
            <person name="Breitwieser F.P."/>
            <person name="Buerckstuemmer T."/>
            <person name="Bennett K.L."/>
            <person name="Superti-Furga G."/>
            <person name="Colinge J."/>
        </authorList>
    </citation>
    <scope>IDENTIFICATION BY MASS SPECTROMETRY [LARGE SCALE ANALYSIS]</scope>
</reference>
<reference key="9">
    <citation type="journal article" date="2014" name="J. Cell Sci.">
        <title>Subunit composition of the human cytoplasmic dynein-2 complex.</title>
        <authorList>
            <person name="Asante D."/>
            <person name="Stevenson N.L."/>
            <person name="Stephens D.J."/>
        </authorList>
    </citation>
    <scope>IDENTIFICATION IN THE CYTOPLASMIC DYNEIN 2 COMPLEX</scope>
</reference>
<reference key="10">
    <citation type="journal article" date="2015" name="Nat. Commun.">
        <title>Mutations in DYNC2LI1 disrupt cilia function and cause short rib polydactyly syndrome.</title>
        <authorList>
            <consortium name="University of Washington Center for Mendelian Genomics Consortium"/>
            <person name="Taylor S.P."/>
            <person name="Dantas T.J."/>
            <person name="Duran I."/>
            <person name="Wu S."/>
            <person name="Lachman R.S."/>
            <person name="Nelson S.F."/>
            <person name="Cohn D.H."/>
            <person name="Vallee R.B."/>
            <person name="Krakow D."/>
        </authorList>
    </citation>
    <scope>FUNCTION</scope>
    <scope>TISSUE SPECIFICITY</scope>
    <scope>INVOLVEMENT IN SRTD15</scope>
    <scope>VARIANT SRTD15 VAL-117</scope>
</reference>
<reference key="11">
    <citation type="journal article" date="2015" name="Sci. Rep.">
        <title>DYNC2LI1 mutations broaden the clinical spectrum of dynein-2 defects.</title>
        <authorList>
            <person name="Kessler K."/>
            <person name="Wunderlich I."/>
            <person name="Uebe S."/>
            <person name="Falk N.S."/>
            <person name="Giessl A."/>
            <person name="Brandstaetter J.H."/>
            <person name="Popp B."/>
            <person name="Klinger P."/>
            <person name="Ekici A.B."/>
            <person name="Sticht H."/>
            <person name="Doerr H.G."/>
            <person name="Reis A."/>
            <person name="Roepman R."/>
            <person name="Seemanova E."/>
            <person name="Thiel C.T."/>
        </authorList>
    </citation>
    <scope>FUNCTION</scope>
    <scope>TISSUE SPECIFICITY</scope>
    <scope>SUBCELLULAR LOCATION</scope>
    <scope>INVOLVEMENT IN SRTD15</scope>
    <scope>VARIANT SRTD15 ILE-220</scope>
</reference>
<reference key="12">
    <citation type="journal article" date="2018" name="Mol. Biol. Cell">
        <title>Interaction of WDR60 intermediate chain with TCTEX1D2 light chain of the dynein-2 complex is crucial for ciliary protein trafficking.</title>
        <authorList>
            <person name="Hamada Y."/>
            <person name="Tsurumi Y."/>
            <person name="Nozaki S."/>
            <person name="Katoh Y."/>
            <person name="Nakayama K."/>
        </authorList>
    </citation>
    <scope>SUBUNIT</scope>
    <scope>FUNCTION</scope>
    <scope>INTERACTION WITH DYNC2H1</scope>
    <scope>SUBCELLULAR LOCATION</scope>
</reference>
<reference evidence="15 16" key="13">
    <citation type="journal article" date="2019" name="Nat. Struct. Mol. Biol.">
        <title>Structure of the dynein-2 complex and its assembly with intraflagellar transport trains.</title>
        <authorList>
            <person name="Toropova K."/>
            <person name="Zalyte R."/>
            <person name="Mukhopadhyay A.G."/>
            <person name="Mladenov M."/>
            <person name="Carter A.P."/>
            <person name="Roberts A.J."/>
        </authorList>
    </citation>
    <scope>STRUCTURE BY ELECTRON MICROSCOPY (3.90 ANGSTROMS) OF THE CYTOPLASMIC DYNEIN 2 COMPLEX</scope>
</reference>
<gene>
    <name type="primary">DYNC2LI1</name>
    <name evidence="10" type="synonym">D2LIC</name>
    <name evidence="13" type="synonym">LIC3</name>
    <name type="ORF">CGI-60</name>
</gene>
<protein>
    <recommendedName>
        <fullName>Cytoplasmic dynein 2 light intermediate chain 1</fullName>
        <shortName evidence="10">Dynein 2 light intermediate chain</shortName>
    </recommendedName>
</protein>
<feature type="chain" id="PRO_0000318750" description="Cytoplasmic dynein 2 light intermediate chain 1">
    <location>
        <begin position="1"/>
        <end position="351"/>
    </location>
</feature>
<feature type="splice variant" id="VSP_031287" description="In isoform 5." evidence="11">
    <original>TFSLVLVLDLSKPNDLWPTMENLLQATKSHVDKVIMK</original>
    <variation>SWQLSSLLPVSMNLTTPVPHINEIIHYLSFCYLFHLA</variation>
    <location>
        <begin position="108"/>
        <end position="144"/>
    </location>
</feature>
<feature type="splice variant" id="VSP_031288" description="In isoform 5." evidence="11">
    <location>
        <begin position="145"/>
        <end position="351"/>
    </location>
</feature>
<feature type="splice variant" id="VSP_031289" description="In isoform 2." evidence="11">
    <original>P</original>
    <variation>PQ</variation>
    <location>
        <position position="169"/>
    </location>
</feature>
<feature type="splice variant" id="VSP_031290" description="In isoform 4." evidence="11">
    <original>DHELIDPFPVPLVIIGSKYDVFQDFESEKRKV</original>
    <variation>VSCCLGLLLESLVPFIVNDNITNNFFRFLCMT</variation>
    <location>
        <begin position="170"/>
        <end position="201"/>
    </location>
</feature>
<feature type="splice variant" id="VSP_031291" description="In isoform 4." evidence="11">
    <location>
        <begin position="202"/>
        <end position="351"/>
    </location>
</feature>
<feature type="splice variant" id="VSP_031292" description="In isoform 3." evidence="12">
    <original>ELEQYKRSSSKSWKQIELDS</original>
    <variation>VLS</variation>
    <location>
        <begin position="332"/>
        <end position="351"/>
    </location>
</feature>
<feature type="sequence variant" id="VAR_038874" description="In dbSNP:rs2288709." evidence="4 9">
    <original>F</original>
    <variation>S</variation>
    <location>
        <position position="33"/>
    </location>
</feature>
<feature type="sequence variant" id="VAR_038875" description="In dbSNP:rs17854966." evidence="3">
    <original>P</original>
    <variation>S</variation>
    <location>
        <position position="58"/>
    </location>
</feature>
<feature type="sequence variant" id="VAR_077814" description="In SRTD15; dbSNP:rs201948500." evidence="5">
    <original>L</original>
    <variation>V</variation>
    <location>
        <position position="117"/>
    </location>
</feature>
<feature type="sequence variant" id="VAR_077815" description="In SRTD15; dbSNP:rs886037860." evidence="6">
    <original>T</original>
    <variation>I</variation>
    <location>
        <position position="220"/>
    </location>
</feature>
<feature type="sequence variant" id="VAR_038876" description="In dbSNP:rs11556157." evidence="4 9">
    <original>I</original>
    <variation>L</variation>
    <location>
        <position position="230"/>
    </location>
</feature>
<feature type="sequence conflict" description="In Ref. 7; CAB43233." evidence="14" ref="7">
    <original>I</original>
    <variation>F</variation>
    <location>
        <position position="29"/>
    </location>
</feature>
<name>DC2L1_HUMAN</name>
<comment type="function">
    <text evidence="5 6 7">Acts as one of several non-catalytic accessory components of the cytoplasmic dynein 2 complex (dynein-2 complex), a motor protein complex that drives the movement of cargos along microtubules within cilia and flagella in concert with the intraflagellar transport (IFT) system, facilitating the assembly of these organelles (PubMed:29742051). Involved in the regulation of ciliary length (PubMed:26077881, PubMed:26130459).</text>
</comment>
<comment type="subunit">
    <text evidence="7 8">Light intermediate chain of the cytoplasmic dynein complex 2, a multisubunit complex composed at least of eleven different proteins. The cytoplasmic dynein 2 complex consists of two catalytic heavy chains (HCs) and a number of non-catalytic subunits presented by intermediate chains (ICs), light intermediate chains (LICs) and light chains (LCs). Among them, a heavy chain (DYNC2H1), two intermediate chains (DYNC2I2 and DYNC2I1), a light intermediate chain (DYNC2LI1), and a light chain (DYNLT2B) are unique to the dynein-2 complex, but a subset of light chains are also shared by dynein-1 and dynein-2 complexes (PubMed:29742051, PubMed:31451806). Dynein-2 complex is built around two copies of cytoplasmic dynein 2 heavy chain 1 (DYNC2H1). The C-terminal region of DYNC2H1 forms the motor domain, which converts the energy from ATP hydrolysis into movement. Its N-terminal region forms the tail, an extended structure that binds the other subunits and holds the two heavy chains in a homodimer. Interacts with DYNC2H1 (via N-terminus); this interaction stabilizes the dynein-2 complex structure (PubMed:29742051).</text>
</comment>
<comment type="interaction">
    <interactant intactId="EBI-8568003">
        <id>Q8TCX1</id>
    </interactant>
    <interactant intactId="EBI-990792">
        <id>P00441</id>
        <label>SOD1</label>
    </interactant>
    <organismsDiffer>false</organismsDiffer>
    <experiments>3</experiments>
</comment>
<comment type="interaction">
    <interactant intactId="EBI-8568452">
        <id>Q8TCX1-2</id>
    </interactant>
    <interactant intactId="EBI-10303987">
        <id>Q9UHG0</id>
        <label>DCDC2</label>
    </interactant>
    <organismsDiffer>false</organismsDiffer>
    <experiments>3</experiments>
</comment>
<comment type="subcellular location">
    <subcellularLocation>
        <location evidence="2">Golgi apparatus</location>
    </subcellularLocation>
    <subcellularLocation>
        <location evidence="6">Cytoplasm</location>
    </subcellularLocation>
    <subcellularLocation>
        <location evidence="6 7">Cell projection</location>
        <location evidence="6 7">Cilium</location>
    </subcellularLocation>
    <subcellularLocation>
        <location evidence="6 7">Cytoplasm</location>
        <location evidence="6 7">Cytoskeleton</location>
        <location evidence="6 7">Cilium basal body</location>
    </subcellularLocation>
    <subcellularLocation>
        <location evidence="1">Cytoplasm</location>
        <location evidence="1">Cytoskeleton</location>
        <location evidence="1">Cilium axoneme</location>
    </subcellularLocation>
    <subcellularLocation>
        <location evidence="6">Cytoplasm</location>
        <location evidence="6">Cytoskeleton</location>
        <location evidence="6">Microtubule organizing center</location>
        <location evidence="6">Centrosome</location>
    </subcellularLocation>
    <text evidence="1">Localizes to the apical cytoplasm.</text>
</comment>
<comment type="alternative products">
    <event type="alternative splicing"/>
    <isoform>
        <id>Q8TCX1-1</id>
        <name>1</name>
        <sequence type="displayed"/>
    </isoform>
    <isoform>
        <id>Q8TCX1-2</id>
        <name>2</name>
        <sequence type="described" ref="VSP_031289"/>
    </isoform>
    <isoform>
        <id>Q8TCX1-3</id>
        <name>3</name>
        <sequence type="described" ref="VSP_031292"/>
    </isoform>
    <isoform>
        <id>Q8TCX1-4</id>
        <name>4</name>
        <sequence type="described" ref="VSP_031290 VSP_031291"/>
    </isoform>
    <isoform>
        <id>Q8TCX1-5</id>
        <name>5</name>
        <sequence type="described" ref="VSP_031287 VSP_031288"/>
    </isoform>
</comment>
<comment type="tissue specificity">
    <text evidence="5 6">Expressed in bone, brain, kidney, and cartilage (PubMed:26077881, PubMed:26130459). Lower expression in heart, liver, lung, placenta and thymus (PubMed:26077881).</text>
</comment>
<comment type="disease" evidence="5 6">
    <disease id="DI-04792">
        <name>Short-rib thoracic dysplasia 15 with polydactyly</name>
        <acronym>SRTD15</acronym>
        <description>A form of short-rib thoracic dysplasia, a group of autosomal recessive ciliopathies that are characterized by a constricted thoracic cage, short ribs, shortened tubular bones, and a 'trident' appearance of the acetabular roof. Polydactyly is variably present. Non-skeletal involvement can include cleft lip/palate as well as anomalies of major organs such as the brain, eye, heart, kidneys, liver, pancreas, intestines, and genitalia. Some forms of the disease are lethal in the neonatal period due to respiratory insufficiency secondary to a severely restricted thoracic cage, whereas others are compatible with life. Disease spectrum encompasses Ellis-van Creveld syndrome, asphyxiating thoracic dystrophy (Jeune syndrome), Mainzer-Saldino syndrome, and short rib-polydactyly syndrome.</description>
        <dbReference type="MIM" id="617088"/>
    </disease>
    <text>The disease is caused by variants affecting the gene represented in this entry.</text>
</comment>
<comment type="similarity">
    <text evidence="14">Belongs to the dynein light intermediate chain family.</text>
</comment>
<comment type="sequence caution" evidence="14">
    <conflict type="frameshift">
        <sequence resource="EMBL-CDS" id="AAD34055"/>
    </conflict>
</comment>